<name>PRD14_HUMAN</name>
<organism>
    <name type="scientific">Homo sapiens</name>
    <name type="common">Human</name>
    <dbReference type="NCBI Taxonomy" id="9606"/>
    <lineage>
        <taxon>Eukaryota</taxon>
        <taxon>Metazoa</taxon>
        <taxon>Chordata</taxon>
        <taxon>Craniata</taxon>
        <taxon>Vertebrata</taxon>
        <taxon>Euteleostomi</taxon>
        <taxon>Mammalia</taxon>
        <taxon>Eutheria</taxon>
        <taxon>Euarchontoglires</taxon>
        <taxon>Primates</taxon>
        <taxon>Haplorrhini</taxon>
        <taxon>Catarrhini</taxon>
        <taxon>Hominidae</taxon>
        <taxon>Homo</taxon>
    </lineage>
</organism>
<sequence>MALPRPSEAVPQDKVCYPPESSPQNLAAYYTPFPSYGHYRNSLATVEEDFQPFRQLEAAASAAPAMPPFPFRMAPPLLSPGLGLQREPLYDLPWYSKLPPWYPIPHVPREVPPFLSSSHEYAGASSEDLGHQIIGGDNESGPCCGPDTLIPPPPADASLLPEGLRTSQLLPCSPSKQSEDGPKPSNQEGKSPARFQFTEEDLHFVLYGVTPSLEHPASLHHAISGLLVPPDSSGSDSLPQTLDKDSLQLPEGLCLMQTVFGEVPHFGVFCSSFIAKGVRFGPFQGKVVNASEVKTYGDNSVMWEIFEDGHLSHFIDGKGGTGNWMSYVNCARFPKEQNLVAVQCQGHIFYESCKEIHQNQELLVWYGDCYEKFLDIPVSLQVTEPGKQPSGPSEESAEGYRCERCGKVFTYKYYRDKHLKYTPCVDKGDRKFPCSLCKRSFEKRDRLRIHILHVHEKHRPHKCSTCGKCFSQSSSLNKHMRVHSGDRPYQCVYCTKRFTASSILRTHIRQHSGEKPFKCKYCGKSFASHAAHDSHVRRSHKEDDGCSCSICGKIFSDQETFYSHMKFHEDY</sequence>
<reference key="1">
    <citation type="submission" date="2000-11" db="EMBL/GenBank/DDBJ databases">
        <title>A family of novel PR-domain (PRDM) genes as candidate tumor suppressors.</title>
        <authorList>
            <person name="Yang X.-H."/>
            <person name="Huang S."/>
        </authorList>
    </citation>
    <scope>NUCLEOTIDE SEQUENCE [MRNA]</scope>
</reference>
<reference key="2">
    <citation type="journal article" date="2004" name="Nat. Genet.">
        <title>Complete sequencing and characterization of 21,243 full-length human cDNAs.</title>
        <authorList>
            <person name="Ota T."/>
            <person name="Suzuki Y."/>
            <person name="Nishikawa T."/>
            <person name="Otsuki T."/>
            <person name="Sugiyama T."/>
            <person name="Irie R."/>
            <person name="Wakamatsu A."/>
            <person name="Hayashi K."/>
            <person name="Sato H."/>
            <person name="Nagai K."/>
            <person name="Kimura K."/>
            <person name="Makita H."/>
            <person name="Sekine M."/>
            <person name="Obayashi M."/>
            <person name="Nishi T."/>
            <person name="Shibahara T."/>
            <person name="Tanaka T."/>
            <person name="Ishii S."/>
            <person name="Yamamoto J."/>
            <person name="Saito K."/>
            <person name="Kawai Y."/>
            <person name="Isono Y."/>
            <person name="Nakamura Y."/>
            <person name="Nagahari K."/>
            <person name="Murakami K."/>
            <person name="Yasuda T."/>
            <person name="Iwayanagi T."/>
            <person name="Wagatsuma M."/>
            <person name="Shiratori A."/>
            <person name="Sudo H."/>
            <person name="Hosoiri T."/>
            <person name="Kaku Y."/>
            <person name="Kodaira H."/>
            <person name="Kondo H."/>
            <person name="Sugawara M."/>
            <person name="Takahashi M."/>
            <person name="Kanda K."/>
            <person name="Yokoi T."/>
            <person name="Furuya T."/>
            <person name="Kikkawa E."/>
            <person name="Omura Y."/>
            <person name="Abe K."/>
            <person name="Kamihara K."/>
            <person name="Katsuta N."/>
            <person name="Sato K."/>
            <person name="Tanikawa M."/>
            <person name="Yamazaki M."/>
            <person name="Ninomiya K."/>
            <person name="Ishibashi T."/>
            <person name="Yamashita H."/>
            <person name="Murakawa K."/>
            <person name="Fujimori K."/>
            <person name="Tanai H."/>
            <person name="Kimata M."/>
            <person name="Watanabe M."/>
            <person name="Hiraoka S."/>
            <person name="Chiba Y."/>
            <person name="Ishida S."/>
            <person name="Ono Y."/>
            <person name="Takiguchi S."/>
            <person name="Watanabe S."/>
            <person name="Yosida M."/>
            <person name="Hotuta T."/>
            <person name="Kusano J."/>
            <person name="Kanehori K."/>
            <person name="Takahashi-Fujii A."/>
            <person name="Hara H."/>
            <person name="Tanase T.-O."/>
            <person name="Nomura Y."/>
            <person name="Togiya S."/>
            <person name="Komai F."/>
            <person name="Hara R."/>
            <person name="Takeuchi K."/>
            <person name="Arita M."/>
            <person name="Imose N."/>
            <person name="Musashino K."/>
            <person name="Yuuki H."/>
            <person name="Oshima A."/>
            <person name="Sasaki N."/>
            <person name="Aotsuka S."/>
            <person name="Yoshikawa Y."/>
            <person name="Matsunawa H."/>
            <person name="Ichihara T."/>
            <person name="Shiohata N."/>
            <person name="Sano S."/>
            <person name="Moriya S."/>
            <person name="Momiyama H."/>
            <person name="Satoh N."/>
            <person name="Takami S."/>
            <person name="Terashima Y."/>
            <person name="Suzuki O."/>
            <person name="Nakagawa S."/>
            <person name="Senoh A."/>
            <person name="Mizoguchi H."/>
            <person name="Goto Y."/>
            <person name="Shimizu F."/>
            <person name="Wakebe H."/>
            <person name="Hishigaki H."/>
            <person name="Watanabe T."/>
            <person name="Sugiyama A."/>
            <person name="Takemoto M."/>
            <person name="Kawakami B."/>
            <person name="Yamazaki M."/>
            <person name="Watanabe K."/>
            <person name="Kumagai A."/>
            <person name="Itakura S."/>
            <person name="Fukuzumi Y."/>
            <person name="Fujimori Y."/>
            <person name="Komiyama M."/>
            <person name="Tashiro H."/>
            <person name="Tanigami A."/>
            <person name="Fujiwara T."/>
            <person name="Ono T."/>
            <person name="Yamada K."/>
            <person name="Fujii Y."/>
            <person name="Ozaki K."/>
            <person name="Hirao M."/>
            <person name="Ohmori Y."/>
            <person name="Kawabata A."/>
            <person name="Hikiji T."/>
            <person name="Kobatake N."/>
            <person name="Inagaki H."/>
            <person name="Ikema Y."/>
            <person name="Okamoto S."/>
            <person name="Okitani R."/>
            <person name="Kawakami T."/>
            <person name="Noguchi S."/>
            <person name="Itoh T."/>
            <person name="Shigeta K."/>
            <person name="Senba T."/>
            <person name="Matsumura K."/>
            <person name="Nakajima Y."/>
            <person name="Mizuno T."/>
            <person name="Morinaga M."/>
            <person name="Sasaki M."/>
            <person name="Togashi T."/>
            <person name="Oyama M."/>
            <person name="Hata H."/>
            <person name="Watanabe M."/>
            <person name="Komatsu T."/>
            <person name="Mizushima-Sugano J."/>
            <person name="Satoh T."/>
            <person name="Shirai Y."/>
            <person name="Takahashi Y."/>
            <person name="Nakagawa K."/>
            <person name="Okumura K."/>
            <person name="Nagase T."/>
            <person name="Nomura N."/>
            <person name="Kikuchi H."/>
            <person name="Masuho Y."/>
            <person name="Yamashita R."/>
            <person name="Nakai K."/>
            <person name="Yada T."/>
            <person name="Nakamura Y."/>
            <person name="Ohara O."/>
            <person name="Isogai T."/>
            <person name="Sugano S."/>
        </authorList>
    </citation>
    <scope>NUCLEOTIDE SEQUENCE [LARGE SCALE MRNA]</scope>
</reference>
<reference key="3">
    <citation type="journal article" date="2004" name="Genome Res.">
        <title>The status, quality, and expansion of the NIH full-length cDNA project: the Mammalian Gene Collection (MGC).</title>
        <authorList>
            <consortium name="The MGC Project Team"/>
        </authorList>
    </citation>
    <scope>NUCLEOTIDE SEQUENCE [LARGE SCALE MRNA]</scope>
    <scope>VARIANT GLU-244</scope>
    <source>
        <tissue>Ovary</tissue>
    </source>
</reference>
<reference key="4">
    <citation type="journal article" date="2007" name="Cancer Res.">
        <title>Gene amplification and overexpression of PRDM14 in breast cancers.</title>
        <authorList>
            <person name="Nishikawa N."/>
            <person name="Toyota M."/>
            <person name="Suzuki H."/>
            <person name="Honma T."/>
            <person name="Fujikane T."/>
            <person name="Ohmura T."/>
            <person name="Nishidate T."/>
            <person name="Ohe-Toyota M."/>
            <person name="Maruyama R."/>
            <person name="Sonoda T."/>
            <person name="Sasaki Y."/>
            <person name="Urano T."/>
            <person name="Imai K."/>
            <person name="Hirata K."/>
            <person name="Tokino T."/>
        </authorList>
    </citation>
    <scope>FUNCTION</scope>
    <scope>SUBCELLULAR LOCATION</scope>
    <scope>TISSUE SPECIFICITY</scope>
</reference>
<reference key="5">
    <citation type="journal article" date="2010" name="Nature">
        <title>A genome-wide RNAi screen reveals determinants of human embryonic stem cell identity.</title>
        <authorList>
            <person name="Chia N.Y."/>
            <person name="Chan Y.S."/>
            <person name="Feng B."/>
            <person name="Lu X."/>
            <person name="Orlov Y.L."/>
            <person name="Moreau D."/>
            <person name="Kumar P."/>
            <person name="Yang L."/>
            <person name="Jiang J."/>
            <person name="Lau M.S."/>
            <person name="Huss M."/>
            <person name="Soh B.S."/>
            <person name="Kraus P."/>
            <person name="Li P."/>
            <person name="Lufkin T."/>
            <person name="Lim B."/>
            <person name="Clarke N.D."/>
            <person name="Bard F."/>
            <person name="Ng H.H."/>
        </authorList>
    </citation>
    <scope>FUNCTION</scope>
    <scope>TISSUE SPECIFICITY</scope>
</reference>
<reference key="6">
    <citation type="journal article" date="2011" name="Sci. Signal.">
        <title>System-wide temporal characterization of the proteome and phosphoproteome of human embryonic stem cell differentiation.</title>
        <authorList>
            <person name="Rigbolt K.T."/>
            <person name="Prokhorova T.A."/>
            <person name="Akimov V."/>
            <person name="Henningsen J."/>
            <person name="Johansen P.T."/>
            <person name="Kratchmarova I."/>
            <person name="Kassem M."/>
            <person name="Mann M."/>
            <person name="Olsen J.V."/>
            <person name="Blagoev B."/>
        </authorList>
    </citation>
    <scope>PHOSPHORYLATION [LARGE SCALE ANALYSIS] AT SER-79</scope>
    <scope>IDENTIFICATION BY MASS SPECTROMETRY [LARGE SCALE ANALYSIS]</scope>
</reference>
<reference key="7">
    <citation type="journal article" date="2016" name="Nature">
        <title>Co-repressor CBFA2T2 regulates pluripotency and germline development.</title>
        <authorList>
            <person name="Tu S."/>
            <person name="Narendra V."/>
            <person name="Yamaji M."/>
            <person name="Vidal S.E."/>
            <person name="Rojas L.A."/>
            <person name="Wang X."/>
            <person name="Kim S.Y."/>
            <person name="Garcia B.A."/>
            <person name="Tuschl T."/>
            <person name="Stadtfeld M."/>
            <person name="Reinberg D."/>
        </authorList>
    </citation>
    <scope>INTERACTION WITH CBFA2T2</scope>
</reference>
<dbReference type="EC" id="2.1.1.-"/>
<dbReference type="EMBL" id="AF319458">
    <property type="protein sequence ID" value="AAG39635.1"/>
    <property type="molecule type" value="mRNA"/>
</dbReference>
<dbReference type="EMBL" id="AK022595">
    <property type="protein sequence ID" value="BAB14120.1"/>
    <property type="molecule type" value="mRNA"/>
</dbReference>
<dbReference type="EMBL" id="BC052311">
    <property type="protein sequence ID" value="AAH52311.1"/>
    <property type="molecule type" value="mRNA"/>
</dbReference>
<dbReference type="CCDS" id="CCDS6206.1"/>
<dbReference type="RefSeq" id="NP_078780.1">
    <property type="nucleotide sequence ID" value="NM_024504.4"/>
</dbReference>
<dbReference type="SMR" id="Q9GZV8"/>
<dbReference type="BioGRID" id="122025">
    <property type="interactions" value="93"/>
</dbReference>
<dbReference type="DIP" id="DIP-58143N"/>
<dbReference type="FunCoup" id="Q9GZV8">
    <property type="interactions" value="951"/>
</dbReference>
<dbReference type="IntAct" id="Q9GZV8">
    <property type="interactions" value="82"/>
</dbReference>
<dbReference type="MINT" id="Q9GZV8"/>
<dbReference type="STRING" id="9606.ENSP00000276594"/>
<dbReference type="ChEMBL" id="CHEMBL5214856"/>
<dbReference type="iPTMnet" id="Q9GZV8"/>
<dbReference type="PhosphoSitePlus" id="Q9GZV8"/>
<dbReference type="BioMuta" id="PRDM14"/>
<dbReference type="DMDM" id="17368925"/>
<dbReference type="jPOST" id="Q9GZV8"/>
<dbReference type="MassIVE" id="Q9GZV8"/>
<dbReference type="PaxDb" id="9606-ENSP00000276594"/>
<dbReference type="PeptideAtlas" id="Q9GZV8"/>
<dbReference type="ProteomicsDB" id="80159"/>
<dbReference type="ABCD" id="Q9GZV8">
    <property type="antibodies" value="13 sequenced antibodies"/>
</dbReference>
<dbReference type="Antibodypedia" id="12206">
    <property type="antibodies" value="412 antibodies from 33 providers"/>
</dbReference>
<dbReference type="DNASU" id="63978"/>
<dbReference type="Ensembl" id="ENST00000276594.3">
    <property type="protein sequence ID" value="ENSP00000276594.2"/>
    <property type="gene ID" value="ENSG00000147596.4"/>
</dbReference>
<dbReference type="GeneID" id="63978"/>
<dbReference type="KEGG" id="hsa:63978"/>
<dbReference type="MANE-Select" id="ENST00000276594.3">
    <property type="protein sequence ID" value="ENSP00000276594.2"/>
    <property type="RefSeq nucleotide sequence ID" value="NM_024504.4"/>
    <property type="RefSeq protein sequence ID" value="NP_078780.1"/>
</dbReference>
<dbReference type="UCSC" id="uc003xym.3">
    <property type="organism name" value="human"/>
</dbReference>
<dbReference type="AGR" id="HGNC:14001"/>
<dbReference type="CTD" id="63978"/>
<dbReference type="DisGeNET" id="63978"/>
<dbReference type="GeneCards" id="PRDM14"/>
<dbReference type="HGNC" id="HGNC:14001">
    <property type="gene designation" value="PRDM14"/>
</dbReference>
<dbReference type="HPA" id="ENSG00000147596">
    <property type="expression patterns" value="Not detected"/>
</dbReference>
<dbReference type="MIM" id="611781">
    <property type="type" value="gene"/>
</dbReference>
<dbReference type="neXtProt" id="NX_Q9GZV8"/>
<dbReference type="OpenTargets" id="ENSG00000147596"/>
<dbReference type="PharmGKB" id="PA33712"/>
<dbReference type="VEuPathDB" id="HostDB:ENSG00000147596"/>
<dbReference type="eggNOG" id="KOG1721">
    <property type="taxonomic scope" value="Eukaryota"/>
</dbReference>
<dbReference type="GeneTree" id="ENSGT00940000159454"/>
<dbReference type="HOGENOM" id="CLU_034551_1_0_1"/>
<dbReference type="InParanoid" id="Q9GZV8"/>
<dbReference type="OMA" id="TEGYRCE"/>
<dbReference type="OrthoDB" id="3565419at2759"/>
<dbReference type="PAN-GO" id="Q9GZV8">
    <property type="GO annotations" value="4 GO annotations based on evolutionary models"/>
</dbReference>
<dbReference type="PhylomeDB" id="Q9GZV8"/>
<dbReference type="TreeFam" id="TF106412"/>
<dbReference type="PathwayCommons" id="Q9GZV8"/>
<dbReference type="Reactome" id="R-HSA-452723">
    <property type="pathway name" value="Transcriptional regulation of pluripotent stem cells"/>
</dbReference>
<dbReference type="SignaLink" id="Q9GZV8"/>
<dbReference type="SIGNOR" id="Q9GZV8"/>
<dbReference type="BioGRID-ORCS" id="63978">
    <property type="hits" value="14 hits in 1170 CRISPR screens"/>
</dbReference>
<dbReference type="GenomeRNAi" id="63978"/>
<dbReference type="Pharos" id="Q9GZV8">
    <property type="development level" value="Tbio"/>
</dbReference>
<dbReference type="PRO" id="PR:Q9GZV8"/>
<dbReference type="Proteomes" id="UP000005640">
    <property type="component" value="Chromosome 8"/>
</dbReference>
<dbReference type="RNAct" id="Q9GZV8">
    <property type="molecule type" value="protein"/>
</dbReference>
<dbReference type="Bgee" id="ENSG00000147596">
    <property type="expression patterns" value="Expressed in buccal mucosa cell and 14 other cell types or tissues"/>
</dbReference>
<dbReference type="ExpressionAtlas" id="Q9GZV8">
    <property type="expression patterns" value="baseline and differential"/>
</dbReference>
<dbReference type="GO" id="GO:0043231">
    <property type="term" value="C:intracellular membrane-bounded organelle"/>
    <property type="evidence" value="ECO:0000314"/>
    <property type="project" value="HPA"/>
</dbReference>
<dbReference type="GO" id="GO:0005654">
    <property type="term" value="C:nucleoplasm"/>
    <property type="evidence" value="ECO:0000314"/>
    <property type="project" value="HPA"/>
</dbReference>
<dbReference type="GO" id="GO:0005634">
    <property type="term" value="C:nucleus"/>
    <property type="evidence" value="ECO:0000318"/>
    <property type="project" value="GO_Central"/>
</dbReference>
<dbReference type="GO" id="GO:0031490">
    <property type="term" value="F:chromatin DNA binding"/>
    <property type="evidence" value="ECO:0007669"/>
    <property type="project" value="Ensembl"/>
</dbReference>
<dbReference type="GO" id="GO:1990226">
    <property type="term" value="F:histone methyltransferase binding"/>
    <property type="evidence" value="ECO:0007669"/>
    <property type="project" value="Ensembl"/>
</dbReference>
<dbReference type="GO" id="GO:0008168">
    <property type="term" value="F:methyltransferase activity"/>
    <property type="evidence" value="ECO:0007669"/>
    <property type="project" value="UniProtKB-KW"/>
</dbReference>
<dbReference type="GO" id="GO:0141107">
    <property type="term" value="F:methyltransferase regulator activity"/>
    <property type="evidence" value="ECO:0007669"/>
    <property type="project" value="Ensembl"/>
</dbReference>
<dbReference type="GO" id="GO:0003723">
    <property type="term" value="F:RNA binding"/>
    <property type="evidence" value="ECO:0007669"/>
    <property type="project" value="Ensembl"/>
</dbReference>
<dbReference type="GO" id="GO:0000977">
    <property type="term" value="F:RNA polymerase II transcription regulatory region sequence-specific DNA binding"/>
    <property type="evidence" value="ECO:0000318"/>
    <property type="project" value="GO_Central"/>
</dbReference>
<dbReference type="GO" id="GO:0008270">
    <property type="term" value="F:zinc ion binding"/>
    <property type="evidence" value="ECO:0007669"/>
    <property type="project" value="UniProtKB-KW"/>
</dbReference>
<dbReference type="GO" id="GO:0001708">
    <property type="term" value="P:cell fate specification"/>
    <property type="evidence" value="ECO:0007669"/>
    <property type="project" value="Ensembl"/>
</dbReference>
<dbReference type="GO" id="GO:0000902">
    <property type="term" value="P:cell morphogenesis"/>
    <property type="evidence" value="ECO:0007669"/>
    <property type="project" value="Ensembl"/>
</dbReference>
<dbReference type="GO" id="GO:0007566">
    <property type="term" value="P:embryo implantation"/>
    <property type="evidence" value="ECO:0007669"/>
    <property type="project" value="Ensembl"/>
</dbReference>
<dbReference type="GO" id="GO:0009566">
    <property type="term" value="P:fertilization"/>
    <property type="evidence" value="ECO:0007669"/>
    <property type="project" value="Ensembl"/>
</dbReference>
<dbReference type="GO" id="GO:0008543">
    <property type="term" value="P:fibroblast growth factor receptor signaling pathway"/>
    <property type="evidence" value="ECO:0007669"/>
    <property type="project" value="Ensembl"/>
</dbReference>
<dbReference type="GO" id="GO:0007281">
    <property type="term" value="P:germ cell development"/>
    <property type="evidence" value="ECO:0007669"/>
    <property type="project" value="Ensembl"/>
</dbReference>
<dbReference type="GO" id="GO:0030718">
    <property type="term" value="P:germ-line stem cell population maintenance"/>
    <property type="evidence" value="ECO:0007669"/>
    <property type="project" value="Ensembl"/>
</dbReference>
<dbReference type="GO" id="GO:0048873">
    <property type="term" value="P:homeostasis of number of cells within a tissue"/>
    <property type="evidence" value="ECO:0007669"/>
    <property type="project" value="Ensembl"/>
</dbReference>
<dbReference type="GO" id="GO:0001827">
    <property type="term" value="P:inner cell mass cell fate commitment"/>
    <property type="evidence" value="ECO:0007669"/>
    <property type="project" value="Ensembl"/>
</dbReference>
<dbReference type="GO" id="GO:0032259">
    <property type="term" value="P:methylation"/>
    <property type="evidence" value="ECO:0007669"/>
    <property type="project" value="UniProtKB-KW"/>
</dbReference>
<dbReference type="GO" id="GO:0040037">
    <property type="term" value="P:negative regulation of fibroblast growth factor receptor signaling pathway"/>
    <property type="evidence" value="ECO:0007669"/>
    <property type="project" value="Ensembl"/>
</dbReference>
<dbReference type="GO" id="GO:0045814">
    <property type="term" value="P:negative regulation of gene expression, epigenetic"/>
    <property type="evidence" value="ECO:0007669"/>
    <property type="project" value="Ensembl"/>
</dbReference>
<dbReference type="GO" id="GO:0000122">
    <property type="term" value="P:negative regulation of transcription by RNA polymerase II"/>
    <property type="evidence" value="ECO:0007669"/>
    <property type="project" value="Ensembl"/>
</dbReference>
<dbReference type="GO" id="GO:1902093">
    <property type="term" value="P:positive regulation of flagellated sperm motility"/>
    <property type="evidence" value="ECO:0007669"/>
    <property type="project" value="Ensembl"/>
</dbReference>
<dbReference type="GO" id="GO:1902459">
    <property type="term" value="P:positive regulation of stem cell population maintenance"/>
    <property type="evidence" value="ECO:0007669"/>
    <property type="project" value="Ensembl"/>
</dbReference>
<dbReference type="GO" id="GO:0006357">
    <property type="term" value="P:regulation of transcription by RNA polymerase II"/>
    <property type="evidence" value="ECO:0000318"/>
    <property type="project" value="GO_Central"/>
</dbReference>
<dbReference type="CDD" id="cd19198">
    <property type="entry name" value="PR-SET_PRDM14"/>
    <property type="match status" value="1"/>
</dbReference>
<dbReference type="FunFam" id="2.170.270.10:FF:000032">
    <property type="entry name" value="PR domain containing 14"/>
    <property type="match status" value="1"/>
</dbReference>
<dbReference type="FunFam" id="3.30.160.60:FF:000905">
    <property type="entry name" value="PR domain containing 14"/>
    <property type="match status" value="1"/>
</dbReference>
<dbReference type="FunFam" id="3.30.160.60:FF:001029">
    <property type="entry name" value="PR domain containing 14"/>
    <property type="match status" value="1"/>
</dbReference>
<dbReference type="FunFam" id="3.30.160.60:FF:000450">
    <property type="entry name" value="PR domain zinc finger protein 14"/>
    <property type="match status" value="1"/>
</dbReference>
<dbReference type="FunFam" id="3.30.160.60:FF:000480">
    <property type="entry name" value="PR domain zinc finger protein 14"/>
    <property type="match status" value="1"/>
</dbReference>
<dbReference type="Gene3D" id="3.30.160.60">
    <property type="entry name" value="Classic Zinc Finger"/>
    <property type="match status" value="4"/>
</dbReference>
<dbReference type="Gene3D" id="2.170.270.10">
    <property type="entry name" value="SET domain"/>
    <property type="match status" value="1"/>
</dbReference>
<dbReference type="InterPro" id="IPR044408">
    <property type="entry name" value="PRDM14_PR-SET"/>
</dbReference>
<dbReference type="InterPro" id="IPR001214">
    <property type="entry name" value="SET_dom"/>
</dbReference>
<dbReference type="InterPro" id="IPR046341">
    <property type="entry name" value="SET_dom_sf"/>
</dbReference>
<dbReference type="InterPro" id="IPR050331">
    <property type="entry name" value="Zinc_finger"/>
</dbReference>
<dbReference type="InterPro" id="IPR036236">
    <property type="entry name" value="Znf_C2H2_sf"/>
</dbReference>
<dbReference type="InterPro" id="IPR013087">
    <property type="entry name" value="Znf_C2H2_type"/>
</dbReference>
<dbReference type="PANTHER" id="PTHR16515">
    <property type="entry name" value="PR DOMAIN ZINC FINGER PROTEIN"/>
    <property type="match status" value="1"/>
</dbReference>
<dbReference type="PANTHER" id="PTHR16515:SF19">
    <property type="entry name" value="PR DOMAIN ZINC FINGER PROTEIN 14"/>
    <property type="match status" value="1"/>
</dbReference>
<dbReference type="Pfam" id="PF21549">
    <property type="entry name" value="PRDM2_PR"/>
    <property type="match status" value="1"/>
</dbReference>
<dbReference type="Pfam" id="PF00096">
    <property type="entry name" value="zf-C2H2"/>
    <property type="match status" value="3"/>
</dbReference>
<dbReference type="SMART" id="SM00317">
    <property type="entry name" value="SET"/>
    <property type="match status" value="1"/>
</dbReference>
<dbReference type="SMART" id="SM00355">
    <property type="entry name" value="ZnF_C2H2"/>
    <property type="match status" value="6"/>
</dbReference>
<dbReference type="SUPFAM" id="SSF57667">
    <property type="entry name" value="beta-beta-alpha zinc fingers"/>
    <property type="match status" value="3"/>
</dbReference>
<dbReference type="SUPFAM" id="SSF82199">
    <property type="entry name" value="SET domain"/>
    <property type="match status" value="1"/>
</dbReference>
<dbReference type="PROSITE" id="PS50280">
    <property type="entry name" value="SET"/>
    <property type="match status" value="1"/>
</dbReference>
<dbReference type="PROSITE" id="PS00028">
    <property type="entry name" value="ZINC_FINGER_C2H2_1"/>
    <property type="match status" value="5"/>
</dbReference>
<dbReference type="PROSITE" id="PS50157">
    <property type="entry name" value="ZINC_FINGER_C2H2_2"/>
    <property type="match status" value="6"/>
</dbReference>
<gene>
    <name type="primary">PRDM14</name>
</gene>
<proteinExistence type="evidence at protein level"/>
<protein>
    <recommendedName>
        <fullName>PR domain zinc finger protein 14</fullName>
        <ecNumber>2.1.1.-</ecNumber>
    </recommendedName>
    <alternativeName>
        <fullName>PR domain-containing protein 14</fullName>
    </alternativeName>
</protein>
<keyword id="KW-0238">DNA-binding</keyword>
<keyword id="KW-0479">Metal-binding</keyword>
<keyword id="KW-0489">Methyltransferase</keyword>
<keyword id="KW-0539">Nucleus</keyword>
<keyword id="KW-0597">Phosphoprotein</keyword>
<keyword id="KW-1267">Proteomics identification</keyword>
<keyword id="KW-1185">Reference proteome</keyword>
<keyword id="KW-0677">Repeat</keyword>
<keyword id="KW-0949">S-adenosyl-L-methionine</keyword>
<keyword id="KW-0804">Transcription</keyword>
<keyword id="KW-0805">Transcription regulation</keyword>
<keyword id="KW-0808">Transferase</keyword>
<keyword id="KW-0862">Zinc</keyword>
<keyword id="KW-0863">Zinc-finger</keyword>
<accession>Q9GZV8</accession>
<accession>Q86UX9</accession>
<comment type="function">
    <text evidence="1 6 7">Transcription factor that has both positive and negative roles on transcription. Required for the maintenance of embryonic stem cell identity and the reacquisition of pluripotency in somatic cells. May play an essential role in germ cell development at 2 levels: the reacquisition of potential pluripotency, including SOX2 up-regulation, and successful epigenetic reprogramming, characterized by EHMT1 repression. Its association with CBFA2T2 is required for the functions in pluripotency and germ cell formation (By similarity). Directly up-regulates the expression of pluripotency gene POU5F1 through its proximal enhancer. Binds to the DNA consensus sequence 5'-GGTC[TC]CTAA-3'.</text>
</comment>
<comment type="subunit">
    <text evidence="8">Interacts with CBFA2T2.</text>
</comment>
<comment type="interaction">
    <interactant intactId="EBI-3957793">
        <id>Q9GZV8</id>
    </interactant>
    <interactant intactId="EBI-11096309">
        <id>Q9NYB9-2</id>
        <label>ABI2</label>
    </interactant>
    <organismsDiffer>false</organismsDiffer>
    <experiments>3</experiments>
</comment>
<comment type="interaction">
    <interactant intactId="EBI-3957793">
        <id>Q9GZV8</id>
    </interactant>
    <interactant intactId="EBI-9641546">
        <id>Q99996-2</id>
        <label>AKAP9</label>
    </interactant>
    <organismsDiffer>false</organismsDiffer>
    <experiments>3</experiments>
</comment>
<comment type="interaction">
    <interactant intactId="EBI-3957793">
        <id>Q9GZV8</id>
    </interactant>
    <interactant intactId="EBI-745213">
        <id>P29972</id>
        <label>AQP1</label>
    </interactant>
    <organismsDiffer>false</organismsDiffer>
    <experiments>3</experiments>
</comment>
<comment type="interaction">
    <interactant intactId="EBI-3957793">
        <id>Q9GZV8</id>
    </interactant>
    <interactant intactId="EBI-1166928">
        <id>Q8N5M1</id>
        <label>ATPAF2</label>
    </interactant>
    <organismsDiffer>false</organismsDiffer>
    <experiments>10</experiments>
</comment>
<comment type="interaction">
    <interactant intactId="EBI-3957793">
        <id>Q9GZV8</id>
    </interactant>
    <interactant intactId="EBI-742750">
        <id>Q8TBE0</id>
        <label>BAHD1</label>
    </interactant>
    <organismsDiffer>false</organismsDiffer>
    <experiments>3</experiments>
</comment>
<comment type="interaction">
    <interactant intactId="EBI-3957793">
        <id>Q9GZV8</id>
    </interactant>
    <interactant intactId="EBI-745073">
        <id>Q9BXY8</id>
        <label>BEX2</label>
    </interactant>
    <organismsDiffer>false</organismsDiffer>
    <experiments>3</experiments>
</comment>
<comment type="interaction">
    <interactant intactId="EBI-3957793">
        <id>Q9GZV8</id>
    </interactant>
    <interactant intactId="EBI-3866279">
        <id>Q9BWT7</id>
        <label>CARD10</label>
    </interactant>
    <organismsDiffer>false</organismsDiffer>
    <experiments>3</experiments>
</comment>
<comment type="interaction">
    <interactant intactId="EBI-3957793">
        <id>Q9GZV8</id>
    </interactant>
    <interactant intactId="EBI-748628">
        <id>O43439</id>
        <label>CBFA2T2</label>
    </interactant>
    <organismsDiffer>false</organismsDiffer>
    <experiments>14</experiments>
</comment>
<comment type="interaction">
    <interactant intactId="EBI-3957793">
        <id>Q9GZV8</id>
    </interactant>
    <interactant intactId="EBI-11954144">
        <id>O43439-4</id>
        <label>CBFA2T2</label>
    </interactant>
    <organismsDiffer>false</organismsDiffer>
    <experiments>6</experiments>
</comment>
<comment type="interaction">
    <interactant intactId="EBI-3957793">
        <id>Q9GZV8</id>
    </interactant>
    <interactant intactId="EBI-5278764">
        <id>Q96GN5</id>
        <label>CDCA7L</label>
    </interactant>
    <organismsDiffer>false</organismsDiffer>
    <experiments>6</experiments>
</comment>
<comment type="interaction">
    <interactant intactId="EBI-3957793">
        <id>Q9GZV8</id>
    </interactant>
    <interactant intactId="EBI-10192698">
        <id>Q02930-3</id>
        <label>CREB5</label>
    </interactant>
    <organismsDiffer>false</organismsDiffer>
    <experiments>3</experiments>
</comment>
<comment type="interaction">
    <interactant intactId="EBI-3957793">
        <id>Q9GZV8</id>
    </interactant>
    <interactant intactId="EBI-9679045">
        <id>Q9NQL9</id>
        <label>DMRT3</label>
    </interactant>
    <organismsDiffer>false</organismsDiffer>
    <experiments>3</experiments>
</comment>
<comment type="interaction">
    <interactant intactId="EBI-3957793">
        <id>Q9GZV8</id>
    </interactant>
    <interactant intactId="EBI-398610">
        <id>O60573</id>
        <label>EIF4E2</label>
    </interactant>
    <organismsDiffer>false</organismsDiffer>
    <experiments>3</experiments>
</comment>
<comment type="interaction">
    <interactant intactId="EBI-3957793">
        <id>Q9GZV8</id>
    </interactant>
    <interactant intactId="EBI-744099">
        <id>Q9H0I2</id>
        <label>ENKD1</label>
    </interactant>
    <organismsDiffer>false</organismsDiffer>
    <experiments>3</experiments>
</comment>
<comment type="interaction">
    <interactant intactId="EBI-3957793">
        <id>Q9GZV8</id>
    </interactant>
    <interactant intactId="EBI-1384254">
        <id>Q86UY5</id>
        <label>FAM83A</label>
    </interactant>
    <organismsDiffer>false</organismsDiffer>
    <experiments>3</experiments>
</comment>
<comment type="interaction">
    <interactant intactId="EBI-3957793">
        <id>Q9GZV8</id>
    </interactant>
    <interactant intactId="EBI-1052570">
        <id>O95995</id>
        <label>GAS8</label>
    </interactant>
    <organismsDiffer>false</organismsDiffer>
    <experiments>3</experiments>
</comment>
<comment type="interaction">
    <interactant intactId="EBI-3957793">
        <id>Q9GZV8</id>
    </interactant>
    <interactant intactId="EBI-744104">
        <id>P55040</id>
        <label>GEM</label>
    </interactant>
    <organismsDiffer>false</organismsDiffer>
    <experiments>3</experiments>
</comment>
<comment type="interaction">
    <interactant intactId="EBI-3957793">
        <id>Q9GZV8</id>
    </interactant>
    <interactant intactId="EBI-748515">
        <id>Q8IVS8</id>
        <label>GLYCTK</label>
    </interactant>
    <organismsDiffer>false</organismsDiffer>
    <experiments>3</experiments>
</comment>
<comment type="interaction">
    <interactant intactId="EBI-3957793">
        <id>Q9GZV8</id>
    </interactant>
    <interactant intactId="EBI-5666657">
        <id>Q9NWQ4</id>
        <label>GPATCH2L</label>
    </interactant>
    <organismsDiffer>false</organismsDiffer>
    <experiments>3</experiments>
</comment>
<comment type="interaction">
    <interactant intactId="EBI-3957793">
        <id>Q9GZV8</id>
    </interactant>
    <interactant intactId="EBI-11959863">
        <id>Q9NWQ4-1</id>
        <label>GPATCH2L</label>
    </interactant>
    <organismsDiffer>false</organismsDiffer>
    <experiments>3</experiments>
</comment>
<comment type="interaction">
    <interactant intactId="EBI-3957793">
        <id>Q9GZV8</id>
    </interactant>
    <interactant intactId="EBI-5460660">
        <id>Q96MH2</id>
        <label>HEXIM2</label>
    </interactant>
    <organismsDiffer>false</organismsDiffer>
    <experiments>4</experiments>
</comment>
<comment type="interaction">
    <interactant intactId="EBI-3957793">
        <id>Q9GZV8</id>
    </interactant>
    <interactant intactId="EBI-3893317">
        <id>P09067</id>
        <label>HOXB5</label>
    </interactant>
    <organismsDiffer>false</organismsDiffer>
    <experiments>3</experiments>
</comment>
<comment type="interaction">
    <interactant intactId="EBI-3957793">
        <id>Q9GZV8</id>
    </interactant>
    <interactant intactId="EBI-1752118">
        <id>P31273</id>
        <label>HOXC8</label>
    </interactant>
    <organismsDiffer>false</organismsDiffer>
    <experiments>3</experiments>
</comment>
<comment type="interaction">
    <interactant intactId="EBI-3957793">
        <id>Q9GZV8</id>
    </interactant>
    <interactant intactId="EBI-739361">
        <id>Q9UBY9</id>
        <label>HSPB7</label>
    </interactant>
    <organismsDiffer>false</organismsDiffer>
    <experiments>3</experiments>
</comment>
<comment type="interaction">
    <interactant intactId="EBI-3957793">
        <id>Q9GZV8</id>
    </interactant>
    <interactant intactId="EBI-2556193">
        <id>Q63ZY3</id>
        <label>KANK2</label>
    </interactant>
    <organismsDiffer>false</organismsDiffer>
    <experiments>3</experiments>
</comment>
<comment type="interaction">
    <interactant intactId="EBI-3957793">
        <id>Q9GZV8</id>
    </interactant>
    <interactant intactId="EBI-739832">
        <id>Q8TBB1</id>
        <label>LNX1</label>
    </interactant>
    <organismsDiffer>false</organismsDiffer>
    <experiments>5</experiments>
</comment>
<comment type="interaction">
    <interactant intactId="EBI-3957793">
        <id>Q9GZV8</id>
    </interactant>
    <interactant intactId="EBI-10244342">
        <id>Q5JRA6-2</id>
        <label>MIA3</label>
    </interactant>
    <organismsDiffer>false</organismsDiffer>
    <experiments>3</experiments>
</comment>
<comment type="interaction">
    <interactant intactId="EBI-3957793">
        <id>Q9GZV8</id>
    </interactant>
    <interactant intactId="EBI-7825220">
        <id>Q9BYC8</id>
        <label>MRPL32</label>
    </interactant>
    <organismsDiffer>false</organismsDiffer>
    <experiments>3</experiments>
</comment>
<comment type="interaction">
    <interactant intactId="EBI-3957793">
        <id>Q9GZV8</id>
    </interactant>
    <interactant intactId="EBI-2858213">
        <id>Q86VE0</id>
        <label>MYPOP</label>
    </interactant>
    <organismsDiffer>false</organismsDiffer>
    <experiments>3</experiments>
</comment>
<comment type="interaction">
    <interactant intactId="EBI-3957793">
        <id>Q9GZV8</id>
    </interactant>
    <interactant intactId="EBI-11022007">
        <id>Q9HBE1-4</id>
        <label>PATZ1</label>
    </interactant>
    <organismsDiffer>false</organismsDiffer>
    <experiments>3</experiments>
</comment>
<comment type="interaction">
    <interactant intactId="EBI-3957793">
        <id>Q9GZV8</id>
    </interactant>
    <interactant intactId="EBI-1053424">
        <id>O43741</id>
        <label>PRKAB2</label>
    </interactant>
    <organismsDiffer>false</organismsDiffer>
    <experiments>4</experiments>
</comment>
<comment type="interaction">
    <interactant intactId="EBI-3957793">
        <id>Q9GZV8</id>
    </interactant>
    <interactant intactId="EBI-1567797">
        <id>Q8WWY3</id>
        <label>PRPF31</label>
    </interactant>
    <organismsDiffer>false</organismsDiffer>
    <experiments>3</experiments>
</comment>
<comment type="interaction">
    <interactant intactId="EBI-3957793">
        <id>Q9GZV8</id>
    </interactant>
    <interactant intactId="EBI-359352">
        <id>P25786</id>
        <label>PSMA1</label>
    </interactant>
    <organismsDiffer>false</organismsDiffer>
    <experiments>3</experiments>
</comment>
<comment type="interaction">
    <interactant intactId="EBI-3957793">
        <id>Q9GZV8</id>
    </interactant>
    <interactant intactId="EBI-1055693">
        <id>O75771</id>
        <label>RAD51D</label>
    </interactant>
    <organismsDiffer>false</organismsDiffer>
    <experiments>3</experiments>
</comment>
<comment type="interaction">
    <interactant intactId="EBI-3957793">
        <id>Q9GZV8</id>
    </interactant>
    <interactant intactId="EBI-721525">
        <id>P98175</id>
        <label>RBM10</label>
    </interactant>
    <organismsDiffer>false</organismsDiffer>
    <experiments>6</experiments>
</comment>
<comment type="interaction">
    <interactant intactId="EBI-3957793">
        <id>Q9GZV8</id>
    </interactant>
    <interactant intactId="EBI-743428">
        <id>Q9P2K3</id>
        <label>RCOR3</label>
    </interactant>
    <organismsDiffer>false</organismsDiffer>
    <experiments>3</experiments>
</comment>
<comment type="interaction">
    <interactant intactId="EBI-3957793">
        <id>Q9GZV8</id>
    </interactant>
    <interactant intactId="EBI-743342">
        <id>Q06455</id>
        <label>RUNX1T1</label>
    </interactant>
    <organismsDiffer>false</organismsDiffer>
    <experiments>3</experiments>
</comment>
<comment type="interaction">
    <interactant intactId="EBI-3957793">
        <id>Q9GZV8</id>
    </interactant>
    <interactant intactId="EBI-11984663">
        <id>Q06455-2</id>
        <label>RUNX1T1</label>
    </interactant>
    <organismsDiffer>false</organismsDiffer>
    <experiments>6</experiments>
</comment>
<comment type="interaction">
    <interactant intactId="EBI-3957793">
        <id>Q9GZV8</id>
    </interactant>
    <interactant intactId="EBI-10224192">
        <id>Q06455-4</id>
        <label>RUNX1T1</label>
    </interactant>
    <organismsDiffer>false</organismsDiffer>
    <experiments>3</experiments>
</comment>
<comment type="interaction">
    <interactant intactId="EBI-3957793">
        <id>Q9GZV8</id>
    </interactant>
    <interactant intactId="EBI-6257312">
        <id>Q9BVN2</id>
        <label>RUSC1</label>
    </interactant>
    <organismsDiffer>false</organismsDiffer>
    <experiments>3</experiments>
</comment>
<comment type="interaction">
    <interactant intactId="EBI-3957793">
        <id>Q9GZV8</id>
    </interactant>
    <interactant intactId="EBI-12000762">
        <id>Q7Z5V6-2</id>
        <label>SAXO4</label>
    </interactant>
    <organismsDiffer>false</organismsDiffer>
    <experiments>3</experiments>
</comment>
<comment type="interaction">
    <interactant intactId="EBI-3957793">
        <id>Q9GZV8</id>
    </interactant>
    <interactant intactId="EBI-748391">
        <id>Q9BWG6</id>
        <label>SCNM1</label>
    </interactant>
    <organismsDiffer>false</organismsDiffer>
    <experiments>5</experiments>
</comment>
<comment type="interaction">
    <interactant intactId="EBI-3957793">
        <id>Q9GZV8</id>
    </interactant>
    <interactant intactId="EBI-766589">
        <id>P09234</id>
        <label>SNRPC</label>
    </interactant>
    <organismsDiffer>false</organismsDiffer>
    <experiments>3</experiments>
</comment>
<comment type="interaction">
    <interactant intactId="EBI-3957793">
        <id>Q9GZV8</id>
    </interactant>
    <interactant intactId="EBI-11974855">
        <id>Q9Y4C2-2</id>
        <label>TCAF1</label>
    </interactant>
    <organismsDiffer>false</organismsDiffer>
    <experiments>3</experiments>
</comment>
<comment type="interaction">
    <interactant intactId="EBI-3957793">
        <id>Q9GZV8</id>
    </interactant>
    <interactant intactId="EBI-747736">
        <id>Q15561</id>
        <label>TEAD4</label>
    </interactant>
    <organismsDiffer>false</organismsDiffer>
    <experiments>3</experiments>
</comment>
<comment type="interaction">
    <interactant intactId="EBI-3957793">
        <id>Q9GZV8</id>
    </interactant>
    <interactant intactId="EBI-750487">
        <id>Q8WW24</id>
        <label>TEKT4</label>
    </interactant>
    <organismsDiffer>false</organismsDiffer>
    <experiments>6</experiments>
</comment>
<comment type="interaction">
    <interactant intactId="EBI-3957793">
        <id>Q9GZV8</id>
    </interactant>
    <interactant intactId="EBI-11741437">
        <id>Q08117-2</id>
        <label>TLE5</label>
    </interactant>
    <organismsDiffer>false</organismsDiffer>
    <experiments>5</experiments>
</comment>
<comment type="interaction">
    <interactant intactId="EBI-3957793">
        <id>Q9GZV8</id>
    </interactant>
    <interactant intactId="EBI-725997">
        <id>Q8WV44</id>
        <label>TRIM41</label>
    </interactant>
    <organismsDiffer>false</organismsDiffer>
    <experiments>3</experiments>
</comment>
<comment type="interaction">
    <interactant intactId="EBI-3957793">
        <id>Q9GZV8</id>
    </interactant>
    <interactant intactId="EBI-744794">
        <id>Q9BZW7</id>
        <label>TSGA10</label>
    </interactant>
    <organismsDiffer>false</organismsDiffer>
    <experiments>3</experiments>
</comment>
<comment type="interaction">
    <interactant intactId="EBI-3957793">
        <id>Q9GZV8</id>
    </interactant>
    <interactant intactId="EBI-8636434">
        <id>Q5I0X7</id>
        <label>TTC32</label>
    </interactant>
    <organismsDiffer>false</organismsDiffer>
    <experiments>3</experiments>
</comment>
<comment type="interaction">
    <interactant intactId="EBI-3957793">
        <id>Q9GZV8</id>
    </interactant>
    <interactant intactId="EBI-7877438">
        <id>P42681</id>
        <label>TXK</label>
    </interactant>
    <organismsDiffer>false</organismsDiffer>
    <experiments>3</experiments>
</comment>
<comment type="interaction">
    <interactant intactId="EBI-3957793">
        <id>Q9GZV8</id>
    </interactant>
    <interactant intactId="EBI-743272">
        <id>O75604</id>
        <label>USP2</label>
    </interactant>
    <organismsDiffer>false</organismsDiffer>
    <experiments>3</experiments>
</comment>
<comment type="interaction">
    <interactant intactId="EBI-3957793">
        <id>Q9GZV8</id>
    </interactant>
    <interactant intactId="EBI-12032042">
        <id>Q64LD2-2</id>
        <label>WDR25</label>
    </interactant>
    <organismsDiffer>false</organismsDiffer>
    <experiments>3</experiments>
</comment>
<comment type="interaction">
    <interactant intactId="EBI-3957793">
        <id>Q9GZV8</id>
    </interactant>
    <interactant intactId="EBI-10177272">
        <id>P15622-3</id>
        <label>ZNF250</label>
    </interactant>
    <organismsDiffer>false</organismsDiffer>
    <experiments>3</experiments>
</comment>
<comment type="interaction">
    <interactant intactId="EBI-3957793">
        <id>Q9GZV8</id>
    </interactant>
    <interactant intactId="EBI-6427977">
        <id>Q96SQ5</id>
        <label>ZNF587</label>
    </interactant>
    <organismsDiffer>false</organismsDiffer>
    <experiments>3</experiments>
</comment>
<comment type="interaction">
    <interactant intactId="EBI-3957793">
        <id>Q9GZV8</id>
    </interactant>
    <interactant intactId="EBI-5667516">
        <id>Q9Y2P0</id>
        <label>ZNF835</label>
    </interactant>
    <organismsDiffer>false</organismsDiffer>
    <experiments>3</experiments>
</comment>
<comment type="interaction">
    <interactant intactId="EBI-3957793">
        <id>Q9GZV8</id>
    </interactant>
    <interactant intactId="EBI-3957603">
        <id>P09022</id>
        <label>Hoxa1</label>
    </interactant>
    <organismsDiffer>true</organismsDiffer>
    <experiments>3</experiments>
</comment>
<comment type="subcellular location">
    <subcellularLocation>
        <location evidence="6">Nucleus</location>
    </subcellularLocation>
</comment>
<comment type="tissue specificity">
    <text evidence="6 7">Expressed in embryonic stem cells. Tends to be overexpressed in breast cancer (at protein level).</text>
</comment>
<comment type="domain">
    <text>The first 5 zinc fingers, but not the last one, are required for DNA-binding and transcriptional activity.</text>
</comment>
<comment type="similarity">
    <text evidence="3">Belongs to the class V-like SAM-binding methyltransferase superfamily.</text>
</comment>
<feature type="chain" id="PRO_0000047771" description="PR domain zinc finger protein 14">
    <location>
        <begin position="1"/>
        <end position="571"/>
    </location>
</feature>
<feature type="domain" description="SET" evidence="3">
    <location>
        <begin position="251"/>
        <end position="367"/>
    </location>
</feature>
<feature type="zinc finger region" description="C2H2-type 1; atypical" evidence="2">
    <location>
        <begin position="400"/>
        <end position="424"/>
    </location>
</feature>
<feature type="zinc finger region" description="C2H2-type 2" evidence="2">
    <location>
        <begin position="432"/>
        <end position="455"/>
    </location>
</feature>
<feature type="zinc finger region" description="C2H2-type 3" evidence="2">
    <location>
        <begin position="461"/>
        <end position="483"/>
    </location>
</feature>
<feature type="zinc finger region" description="C2H2-type 4" evidence="2">
    <location>
        <begin position="489"/>
        <end position="511"/>
    </location>
</feature>
<feature type="zinc finger region" description="C2H2-type 5" evidence="2">
    <location>
        <begin position="517"/>
        <end position="540"/>
    </location>
</feature>
<feature type="zinc finger region" description="C2H2-type 6" evidence="2">
    <location>
        <begin position="546"/>
        <end position="568"/>
    </location>
</feature>
<feature type="region of interest" description="Disordered" evidence="4">
    <location>
        <begin position="129"/>
        <end position="191"/>
    </location>
</feature>
<feature type="region of interest" description="Interaction with CBFA2T2" evidence="1">
    <location>
        <begin position="194"/>
        <end position="384"/>
    </location>
</feature>
<feature type="compositionally biased region" description="Polar residues" evidence="4">
    <location>
        <begin position="165"/>
        <end position="176"/>
    </location>
</feature>
<feature type="modified residue" description="Phosphoserine" evidence="9">
    <location>
        <position position="79"/>
    </location>
</feature>
<feature type="sequence variant" id="VAR_021895" description="In dbSNP:rs3750228." evidence="5">
    <original>K</original>
    <variation>E</variation>
    <location>
        <position position="244"/>
    </location>
</feature>
<evidence type="ECO:0000250" key="1">
    <source>
        <dbReference type="UniProtKB" id="E9Q3T6"/>
    </source>
</evidence>
<evidence type="ECO:0000255" key="2">
    <source>
        <dbReference type="PROSITE-ProRule" id="PRU00042"/>
    </source>
</evidence>
<evidence type="ECO:0000255" key="3">
    <source>
        <dbReference type="PROSITE-ProRule" id="PRU00190"/>
    </source>
</evidence>
<evidence type="ECO:0000256" key="4">
    <source>
        <dbReference type="SAM" id="MobiDB-lite"/>
    </source>
</evidence>
<evidence type="ECO:0000269" key="5">
    <source>
    </source>
</evidence>
<evidence type="ECO:0000269" key="6">
    <source>
    </source>
</evidence>
<evidence type="ECO:0000269" key="7">
    <source>
    </source>
</evidence>
<evidence type="ECO:0000269" key="8">
    <source>
    </source>
</evidence>
<evidence type="ECO:0007744" key="9">
    <source>
    </source>
</evidence>